<reference key="1">
    <citation type="journal article" date="2000" name="Infect. Immun.">
        <title>Four different genes responsible for nonimmune immunoglobulin-binding activities within a single strain of Escherichia coli.</title>
        <authorList>
            <person name="Sandt C.H."/>
            <person name="Hill C.W."/>
        </authorList>
    </citation>
    <scope>NUCLEOTIDE SEQUENCE [GENOMIC DNA]</scope>
    <scope>FUNCTION</scope>
    <scope>BINDING TO FC OF HUMAN IGA AND IGG</scope>
    <scope>SUBUNIT</scope>
    <scope>SUBCELLULAR LOCATION</scope>
    <scope>INDUCTION</scope>
    <source>
        <strain>ATCC 35328 / ECOR 9</strain>
    </source>
</reference>
<reference key="2">
    <citation type="journal article" date="2009" name="Mol. Immunol.">
        <title>The immunoglobulin-binding Eib proteins from Escherichia coli are receptors for IgG Fc.</title>
        <authorList>
            <person name="Leo J.C."/>
            <person name="Goldman A."/>
        </authorList>
    </citation>
    <scope>FUNCTION</scope>
    <scope>BINDING TO HUMAN IGA AND IGG</scope>
    <scope>SUBUNIT</scope>
</reference>
<reference key="3">
    <citation type="journal article" date="2012" name="J. Bacteriol.">
        <title>The translocation domain in trimeric autotransporter adhesins is necessary and sufficient for trimerization and autotransportation.</title>
        <authorList>
            <person name="Mikula K.M."/>
            <person name="Leo J.C."/>
            <person name="Lyskowski A."/>
            <person name="Kedracka-Krok S."/>
            <person name="Pirog A."/>
            <person name="Goldman A."/>
        </authorList>
    </citation>
    <scope>BINDING TO FC</scope>
    <scope>SUBUNIT</scope>
    <scope>SUBCELLULAR LOCATION</scope>
    <scope>DOMAIN</scope>
    <scope>TOPOLOGY</scope>
</reference>
<reference evidence="14 15" key="4">
    <citation type="journal article" date="2011" name="Structure">
        <title>The structure of E. coli IgG-binding protein D suggests a general model for bending and binding in trimeric autotransporter adhesins.</title>
        <authorList>
            <person name="Leo J.C."/>
            <person name="Lyskowski A."/>
            <person name="Hattula K."/>
            <person name="Hartmann M.D."/>
            <person name="Schwarz H."/>
            <person name="Butcher S.J."/>
            <person name="Linke D."/>
            <person name="Lupas A.N."/>
            <person name="Goldman A."/>
        </authorList>
    </citation>
    <scope>X-RAY CRYSTALLOGRAPHY (1.99 ANGSTROMS) OF 160-418</scope>
    <scope>X-RAY CRYSTALLOGRAPHY (2.80 ANGSTROMS) OF 385-441</scope>
    <scope>BINDING TO FC</scope>
    <scope>FUNCTION IN AGGREGATION AND BIOFILM FORMATION</scope>
    <scope>SUBUNIT</scope>
    <scope>SUBCELLULAR LOCATION</scope>
    <scope>DOMAIN</scope>
    <scope>MUTAGENESIS OF 332-LYS--TYR-334; 387-ASP-TYR-388 AND 415-THR--THR-417</scope>
</reference>
<feature type="signal peptide" evidence="2">
    <location>
        <begin position="1"/>
        <end position="26"/>
    </location>
</feature>
<feature type="chain" id="PRO_0000450748" description="Immunoglobulin-binding protein EibD">
    <location>
        <begin position="27"/>
        <end position="511"/>
    </location>
</feature>
<feature type="topological domain" description="Extracellular" evidence="6">
    <location>
        <begin position="27"/>
        <end position="460"/>
    </location>
</feature>
<feature type="transmembrane region" description="Beta stranded" evidence="13">
    <location>
        <begin position="461"/>
        <end position="471"/>
    </location>
</feature>
<feature type="transmembrane region" description="Beta stranded" evidence="13">
    <location>
        <begin position="474"/>
        <end position="485"/>
    </location>
</feature>
<feature type="transmembrane region" description="Beta stranded" evidence="13">
    <location>
        <begin position="488"/>
        <end position="497"/>
    </location>
</feature>
<feature type="transmembrane region" description="Beta stranded" evidence="13">
    <location>
        <begin position="501"/>
        <end position="511"/>
    </location>
</feature>
<feature type="region of interest" description="Surface exposed passenger domain" evidence="13">
    <location>
        <begin position="27"/>
        <end position="417"/>
    </location>
</feature>
<feature type="region of interest" description="Head domain" evidence="5">
    <location>
        <begin position="161"/>
        <end position="287"/>
    </location>
</feature>
<feature type="region of interest" description="Neck" evidence="5">
    <location>
        <begin position="288"/>
        <end position="303"/>
    </location>
</feature>
<feature type="region of interest" description="Right-handed coiled-coil (RHcc)" evidence="5">
    <location>
        <begin position="304"/>
        <end position="349"/>
    </location>
</feature>
<feature type="region of interest" description="Required to bind IgA" evidence="5">
    <location>
        <begin position="329"/>
        <end position="344"/>
    </location>
</feature>
<feature type="region of interest" description="Saddle domain" evidence="5">
    <location>
        <begin position="350"/>
        <end position="375"/>
    </location>
</feature>
<feature type="region of interest" description="Left-handed coiled-coil (LHcc)" evidence="5">
    <location>
        <begin position="376"/>
        <end position="441"/>
    </location>
</feature>
<feature type="region of interest" description="Required to bind IgG" evidence="5">
    <location>
        <begin position="384"/>
        <end position="418"/>
    </location>
</feature>
<feature type="region of interest" description="Outer membrane translocation of the passenger domain" evidence="13">
    <location>
        <begin position="418"/>
        <end position="460"/>
    </location>
</feature>
<feature type="region of interest" description="Translocator domain" evidence="13">
    <location>
        <begin position="461"/>
        <end position="511"/>
    </location>
</feature>
<feature type="coiled-coil region" evidence="5 14 15">
    <location>
        <begin position="304"/>
        <end position="349"/>
    </location>
</feature>
<feature type="coiled-coil region" evidence="5 14 15">
    <location>
        <begin position="376"/>
        <end position="441"/>
    </location>
</feature>
<feature type="mutagenesis site" description="Loss of IgA binding by fragment 161-418, no change in IgG binding." evidence="5">
    <original>KKY</original>
    <variation>AAA</variation>
    <location>
        <begin position="332"/>
        <end position="334"/>
    </location>
</feature>
<feature type="mutagenesis site" description="2-fold decreased affinity for IgA, at least 5-fold decreased affinity for IgG by fragment 161-418." evidence="5">
    <original>DY</original>
    <variation>AA</variation>
    <location>
        <begin position="387"/>
        <end position="388"/>
    </location>
</feature>
<feature type="mutagenesis site" description="5-fold decreased affinity for IgA, 4-fold decreased affinity for IgG by fragment 161-418." evidence="5">
    <original>TRT</original>
    <variation>AAA</variation>
    <location>
        <begin position="415"/>
        <end position="417"/>
    </location>
</feature>
<feature type="strand" evidence="16">
    <location>
        <begin position="170"/>
        <end position="173"/>
    </location>
</feature>
<feature type="strand" evidence="16">
    <location>
        <begin position="184"/>
        <end position="187"/>
    </location>
</feature>
<feature type="strand" evidence="16">
    <location>
        <begin position="198"/>
        <end position="201"/>
    </location>
</feature>
<feature type="strand" evidence="16">
    <location>
        <begin position="212"/>
        <end position="215"/>
    </location>
</feature>
<feature type="strand" evidence="16">
    <location>
        <begin position="228"/>
        <end position="231"/>
    </location>
</feature>
<feature type="strand" evidence="16">
    <location>
        <begin position="244"/>
        <end position="247"/>
    </location>
</feature>
<feature type="strand" evidence="16">
    <location>
        <begin position="258"/>
        <end position="261"/>
    </location>
</feature>
<feature type="strand" evidence="16">
    <location>
        <begin position="268"/>
        <end position="270"/>
    </location>
</feature>
<feature type="strand" evidence="16">
    <location>
        <begin position="283"/>
        <end position="287"/>
    </location>
</feature>
<feature type="helix" evidence="16">
    <location>
        <begin position="306"/>
        <end position="349"/>
    </location>
</feature>
<feature type="strand" evidence="16">
    <location>
        <begin position="350"/>
        <end position="354"/>
    </location>
</feature>
<feature type="strand" evidence="16">
    <location>
        <begin position="367"/>
        <end position="371"/>
    </location>
</feature>
<feature type="helix" evidence="16">
    <location>
        <begin position="372"/>
        <end position="415"/>
    </location>
</feature>
<dbReference type="EMBL" id="AF151675">
    <property type="protein sequence ID" value="AAF63040.1"/>
    <property type="molecule type" value="Genomic_DNA"/>
</dbReference>
<dbReference type="RefSeq" id="WP_054518649.1">
    <property type="nucleotide sequence ID" value="NZ_CYUC01000099.1"/>
</dbReference>
<dbReference type="PDB" id="2XQH">
    <property type="method" value="X-ray"/>
    <property type="resolution" value="1.99 A"/>
    <property type="chains" value="A=160-418"/>
</dbReference>
<dbReference type="PDB" id="2XZR">
    <property type="method" value="X-ray"/>
    <property type="resolution" value="2.80 A"/>
    <property type="chains" value="A=385-441"/>
</dbReference>
<dbReference type="PDBsum" id="2XQH"/>
<dbReference type="PDBsum" id="2XZR"/>
<dbReference type="SMR" id="Q9MCI8"/>
<dbReference type="DIP" id="DIP-59140N"/>
<dbReference type="EvolutionaryTrace" id="Q9MCI8"/>
<dbReference type="GO" id="GO:0009279">
    <property type="term" value="C:cell outer membrane"/>
    <property type="evidence" value="ECO:0007669"/>
    <property type="project" value="UniProtKB-SubCell"/>
</dbReference>
<dbReference type="GO" id="GO:0009986">
    <property type="term" value="C:cell surface"/>
    <property type="evidence" value="ECO:0007669"/>
    <property type="project" value="UniProtKB-SubCell"/>
</dbReference>
<dbReference type="GO" id="GO:0042802">
    <property type="term" value="F:identical protein binding"/>
    <property type="evidence" value="ECO:0000353"/>
    <property type="project" value="IntAct"/>
</dbReference>
<dbReference type="GO" id="GO:0046819">
    <property type="term" value="P:protein secretion by the type V secretion system"/>
    <property type="evidence" value="ECO:0000315"/>
    <property type="project" value="UniProtKB"/>
</dbReference>
<dbReference type="CDD" id="cd12820">
    <property type="entry name" value="LbR_YadA-like"/>
    <property type="match status" value="1"/>
</dbReference>
<dbReference type="Gene3D" id="6.10.250.1970">
    <property type="match status" value="1"/>
</dbReference>
<dbReference type="Gene3D" id="6.10.250.1980">
    <property type="match status" value="1"/>
</dbReference>
<dbReference type="Gene3D" id="3.30.1300.30">
    <property type="entry name" value="GSPII I/J protein-like"/>
    <property type="match status" value="1"/>
</dbReference>
<dbReference type="Gene3D" id="2.150.10.10">
    <property type="entry name" value="Serralysin-like metalloprotease, C-terminal"/>
    <property type="match status" value="1"/>
</dbReference>
<dbReference type="InterPro" id="IPR008640">
    <property type="entry name" value="Adhesin_Head_dom"/>
</dbReference>
<dbReference type="InterPro" id="IPR045584">
    <property type="entry name" value="Pilin-like"/>
</dbReference>
<dbReference type="InterPro" id="IPR011049">
    <property type="entry name" value="Serralysin-like_metalloprot_C"/>
</dbReference>
<dbReference type="InterPro" id="IPR005594">
    <property type="entry name" value="YadA_C"/>
</dbReference>
<dbReference type="Pfam" id="PF03895">
    <property type="entry name" value="YadA_anchor"/>
    <property type="match status" value="1"/>
</dbReference>
<dbReference type="Pfam" id="PF05658">
    <property type="entry name" value="YadA_head"/>
    <property type="match status" value="5"/>
</dbReference>
<dbReference type="SUPFAM" id="SSF101967">
    <property type="entry name" value="Adhesin YadA, collagen-binding domain"/>
    <property type="match status" value="1"/>
</dbReference>
<dbReference type="SUPFAM" id="SSF54523">
    <property type="entry name" value="Pili subunits"/>
    <property type="match status" value="1"/>
</dbReference>
<organism>
    <name type="scientific">Escherichia coli</name>
    <dbReference type="NCBI Taxonomy" id="562"/>
    <lineage>
        <taxon>Bacteria</taxon>
        <taxon>Pseudomonadati</taxon>
        <taxon>Pseudomonadota</taxon>
        <taxon>Gammaproteobacteria</taxon>
        <taxon>Enterobacterales</taxon>
        <taxon>Enterobacteriaceae</taxon>
        <taxon>Escherichia</taxon>
    </lineage>
</organism>
<accession>Q9MCI8</accession>
<proteinExistence type="evidence at protein level"/>
<protein>
    <recommendedName>
        <fullName evidence="7">Immunoglobulin-binding protein EibD</fullName>
    </recommendedName>
    <alternativeName>
        <fullName evidence="8">Trimeric autotransporter adhesin EibD</fullName>
        <shortName evidence="9">TAA EibD</shortName>
    </alternativeName>
    <alternativeName>
        <fullName evidence="9">Type 5 secretion system autotransporter EibD</fullName>
    </alternativeName>
</protein>
<gene>
    <name evidence="7" type="primary">eibD</name>
</gene>
<comment type="function">
    <text evidence="3 4 5">Binds (in a non-immune fashion) to the Fc portion of human IgA and IgG; binding occurs on the cell surface. Confers the ability to survive exposure to human serum exposure (PubMed:10722621). Binds to the Fc portion of human IgG, IgA and to whole mouse antibodies also via Fc (PubMed:19303642). Upon overexpression cells acquire an extra cell surface layer that forms a zipper-like contact between cells; cells autoagglutinate and form biofilm more readily, suggesting it may play a role in defense against a host (PubMed:21742268).</text>
</comment>
<comment type="subunit">
    <text evidence="3 4 6 12">Homotrimer; can probably form mixed heterotrimers in vivo (Probable). Will form mixed heterotrimers with EibA or EibC; these are correctly located in the outer membrane and bind IgG Fc, although less well than homotrimers (PubMed:22155776). In denaturing gels runs as a band of about 210 kDa (PubMed:10722621). Binds the Fc portion of immunoglobulins; binds more than 1 Fc per subunit, can be modeled to bind 3 Fc per trimer (Probable) (PubMed:19303642).</text>
</comment>
<comment type="interaction">
    <interactant intactId="EBI-15935491">
        <id>Q9MCI8</id>
    </interactant>
    <interactant intactId="EBI-15935491">
        <id>Q9MCI8</id>
        <label>eibD</label>
    </interactant>
    <organismsDiffer>false</organismsDiffer>
    <experiments>3</experiments>
</comment>
<comment type="subcellular location">
    <subcellularLocation>
        <location evidence="6 10 11 12">Cell surface</location>
    </subcellularLocation>
    <subcellularLocation>
        <location evidence="6 10 12">Cell outer membrane</location>
        <topology evidence="13">Multi-pass membrane protein</topology>
    </subcellularLocation>
    <text evidence="6 10 11 12">The C-terminal translocator domain is localized in the outer membrane and the passenger domain is at the cell surface.</text>
</comment>
<comment type="induction">
    <text evidence="3">In strain ECOR 9 expression is greater at 37 than 27 degrees Celsius and increases upon entry into stationary phase (at protein level). Upon expression from a plasmid in strain AB1157 (with its own leader sequence) more protein is seen at 37 than 27 degrees Celsius (at protein level).</text>
</comment>
<comment type="domain">
    <text evidence="1 5 6">The signal peptide, cleaved at the inner membrane, guides the autotransporter protein to the periplasmic space (By similarity). Then, trimerization and insertion of the C-terminal translocator domain in the outer membrane forms a hydrophilic pore for the translocation of the passenger domain to the bacterial cell surface (PubMed:22155776). The crystallized passenger domain (residues 161-440) is an entwined, elongated trimer with a head domain, a neck and 2 extended coiled-coil regions of differing handedness separated by a saddle region. There are a number of cavities in the first (right-handed, RHcc) coiled-coil domain that may allow bending of the extended structure. Smaller cavities in the second (left-handed, LHcc) coiled-coil bind 5 Cl(-) and one water molecule. The Fc portion of IgG has been modeled to bind to the LHcc domain just under the saddle; up to 3 Fc can bind to the trimer (PubMed:21742268).</text>
</comment>
<comment type="miscellaneous">
    <text evidence="3">Encoded in a prophage region of strain ECOR 9, upon UV treatment bacteriophage containing this gene can be isolated.</text>
</comment>
<comment type="similarity">
    <text evidence="9">Belongs to the autotransporter-2 (AT-2) (TC 1.B.40) family. Eib subfamily.</text>
</comment>
<name>EIBD_ECOLX</name>
<evidence type="ECO:0000250" key="1">
    <source>
        <dbReference type="UniProtKB" id="P0C2W0"/>
    </source>
</evidence>
<evidence type="ECO:0000255" key="2"/>
<evidence type="ECO:0000269" key="3">
    <source>
    </source>
</evidence>
<evidence type="ECO:0000269" key="4">
    <source>
    </source>
</evidence>
<evidence type="ECO:0000269" key="5">
    <source>
    </source>
</evidence>
<evidence type="ECO:0000269" key="6">
    <source>
    </source>
</evidence>
<evidence type="ECO:0000303" key="7">
    <source>
    </source>
</evidence>
<evidence type="ECO:0000303" key="8">
    <source>
    </source>
</evidence>
<evidence type="ECO:0000305" key="9"/>
<evidence type="ECO:0000305" key="10">
    <source>
    </source>
</evidence>
<evidence type="ECO:0000305" key="11">
    <source>
    </source>
</evidence>
<evidence type="ECO:0000305" key="12">
    <source>
    </source>
</evidence>
<evidence type="ECO:0000305" key="13">
    <source>
    </source>
</evidence>
<evidence type="ECO:0007744" key="14">
    <source>
        <dbReference type="PDB" id="2XQH"/>
    </source>
</evidence>
<evidence type="ECO:0007744" key="15">
    <source>
        <dbReference type="PDB" id="2XZR"/>
    </source>
</evidence>
<evidence type="ECO:0007829" key="16">
    <source>
        <dbReference type="PDB" id="2XQH"/>
    </source>
</evidence>
<sequence length="511" mass="53843">MSKKFTMTLLSSSLAGLLVMSGGVSAQNGTYSVLQDDSQKSGPVKYGSTYEVVKTVDNGNFRYEVKEKKNDKRTLFKFDSEGNVTVKGKGITHTLHDPALKDFARTAEGKKNEQNGNTPPHKLTDSAVRGVYNKVYGLEKTEITGFSVEDGENGKVSLGSDAKASGEFSVAVGNGARATEKASTAVGSWAAADGKQSTALGVGTYAYANASTALGSVAFVDNTATYGTAAGNRAKVDKDATEGTALGAKATVTNKNSVALGANSVTTRDNEVYIGYKTGTESDKTYGTRVLGGLSDGTRNSDAATVGQLNRKVGGVYDDVKARITVESEKQKKYTDQKTSEVNEKVEARTTVGVDSDGKLTRAEGATKTIAVNDGLVALSGRTDRIDYAVGAIDGRVTRNTQSIEKNSKAIAANTRTLQQHSARLDSQQRQINENHKEMKRAAAQSAALTGLFQPYSVGKFNATAAVGGYSDQQALAVGVGYRFNEQTAAKAGVAFSDGDASWNVGVNFEF</sequence>
<keyword id="KW-0002">3D-structure</keyword>
<keyword id="KW-0998">Cell outer membrane</keyword>
<keyword id="KW-0175">Coiled coil</keyword>
<keyword id="KW-0472">Membrane</keyword>
<keyword id="KW-0653">Protein transport</keyword>
<keyword id="KW-0732">Signal</keyword>
<keyword id="KW-0812">Transmembrane</keyword>
<keyword id="KW-1134">Transmembrane beta strand</keyword>
<keyword id="KW-0813">Transport</keyword>